<keyword id="KW-0067">ATP-binding</keyword>
<keyword id="KW-0143">Chaperone</keyword>
<keyword id="KW-0175">Coiled coil</keyword>
<keyword id="KW-0963">Cytoplasm</keyword>
<keyword id="KW-0547">Nucleotide-binding</keyword>
<keyword id="KW-1185">Reference proteome</keyword>
<keyword id="KW-0677">Repeat</keyword>
<keyword id="KW-0346">Stress response</keyword>
<name>CLPB2_STRAW</name>
<gene>
    <name type="primary">clpB2</name>
    <name type="ordered locus">SAV_7241</name>
</gene>
<proteinExistence type="inferred from homology"/>
<comment type="function">
    <text evidence="1">Part of a stress-induced multi-chaperone system, it is involved in the recovery of the cell from heat-induced damage, in cooperation with DnaK, DnaJ and GrpE. Acts before DnaK, in the processing of protein aggregates. Protein binding stimulates the ATPase activity; ATP hydrolysis unfolds the denatured protein aggregates, which probably helps expose new hydrophobic binding sites on the surface of ClpB-bound aggregates, contributing to the solubilization and refolding of denatured protein aggregates by DnaK (By similarity).</text>
</comment>
<comment type="subunit">
    <text evidence="1">Homohexamer. The oligomerization is ATP-dependent (By similarity).</text>
</comment>
<comment type="subcellular location">
    <subcellularLocation>
        <location evidence="3">Cytoplasm</location>
    </subcellularLocation>
</comment>
<comment type="domain">
    <text evidence="1">The Clp repeat (R) domain probably functions as a substrate-discriminating domain, recruiting aggregated proteins to the ClpB hexamer and/or stabilizing bound proteins. The NBD2 domain is responsible for oligomerization, whereas the NBD1 domain stabilizes the hexamer probably in an ATP-dependent manner. The movement of the coiled-coil domain is essential for ClpB ability to rescue proteins from an aggregated state, probably by pulling apart large aggregated proteins, which are bound between the coiled-coils motifs of adjacent ClpB subunits in the functional hexamer (By similarity).</text>
</comment>
<comment type="similarity">
    <text evidence="3">Belongs to the ClpA/ClpB family.</text>
</comment>
<organism>
    <name type="scientific">Streptomyces avermitilis (strain ATCC 31267 / DSM 46492 / JCM 5070 / NBRC 14893 / NCIMB 12804 / NRRL 8165 / MA-4680)</name>
    <dbReference type="NCBI Taxonomy" id="227882"/>
    <lineage>
        <taxon>Bacteria</taxon>
        <taxon>Bacillati</taxon>
        <taxon>Actinomycetota</taxon>
        <taxon>Actinomycetes</taxon>
        <taxon>Kitasatosporales</taxon>
        <taxon>Streptomycetaceae</taxon>
        <taxon>Streptomyces</taxon>
    </lineage>
</organism>
<dbReference type="EMBL" id="BA000030">
    <property type="protein sequence ID" value="BAC74952.1"/>
    <property type="molecule type" value="Genomic_DNA"/>
</dbReference>
<dbReference type="SMR" id="Q826F2"/>
<dbReference type="GeneID" id="41544313"/>
<dbReference type="KEGG" id="sma:SAVERM_7241"/>
<dbReference type="eggNOG" id="COG0542">
    <property type="taxonomic scope" value="Bacteria"/>
</dbReference>
<dbReference type="HOGENOM" id="CLU_005070_4_1_11"/>
<dbReference type="OrthoDB" id="9803641at2"/>
<dbReference type="Proteomes" id="UP000000428">
    <property type="component" value="Chromosome"/>
</dbReference>
<dbReference type="GO" id="GO:0005737">
    <property type="term" value="C:cytoplasm"/>
    <property type="evidence" value="ECO:0007669"/>
    <property type="project" value="UniProtKB-SubCell"/>
</dbReference>
<dbReference type="GO" id="GO:0005524">
    <property type="term" value="F:ATP binding"/>
    <property type="evidence" value="ECO:0007669"/>
    <property type="project" value="UniProtKB-KW"/>
</dbReference>
<dbReference type="GO" id="GO:0016887">
    <property type="term" value="F:ATP hydrolysis activity"/>
    <property type="evidence" value="ECO:0007669"/>
    <property type="project" value="InterPro"/>
</dbReference>
<dbReference type="GO" id="GO:0034605">
    <property type="term" value="P:cellular response to heat"/>
    <property type="evidence" value="ECO:0007669"/>
    <property type="project" value="TreeGrafter"/>
</dbReference>
<dbReference type="GO" id="GO:0042026">
    <property type="term" value="P:protein refolding"/>
    <property type="evidence" value="ECO:0007669"/>
    <property type="project" value="InterPro"/>
</dbReference>
<dbReference type="CDD" id="cd00009">
    <property type="entry name" value="AAA"/>
    <property type="match status" value="1"/>
</dbReference>
<dbReference type="CDD" id="cd19499">
    <property type="entry name" value="RecA-like_ClpB_Hsp104-like"/>
    <property type="match status" value="1"/>
</dbReference>
<dbReference type="FunFam" id="3.40.50.300:FF:000120">
    <property type="entry name" value="ATP-dependent chaperone ClpB"/>
    <property type="match status" value="1"/>
</dbReference>
<dbReference type="FunFam" id="3.40.50.300:FF:000025">
    <property type="entry name" value="ATP-dependent Clp protease subunit"/>
    <property type="match status" value="1"/>
</dbReference>
<dbReference type="FunFam" id="3.40.50.300:FF:000010">
    <property type="entry name" value="Chaperone clpB 1, putative"/>
    <property type="match status" value="1"/>
</dbReference>
<dbReference type="Gene3D" id="1.10.8.60">
    <property type="match status" value="1"/>
</dbReference>
<dbReference type="Gene3D" id="1.10.1780.10">
    <property type="entry name" value="Clp, N-terminal domain"/>
    <property type="match status" value="1"/>
</dbReference>
<dbReference type="Gene3D" id="3.40.50.300">
    <property type="entry name" value="P-loop containing nucleotide triphosphate hydrolases"/>
    <property type="match status" value="3"/>
</dbReference>
<dbReference type="InterPro" id="IPR003593">
    <property type="entry name" value="AAA+_ATPase"/>
</dbReference>
<dbReference type="InterPro" id="IPR003959">
    <property type="entry name" value="ATPase_AAA_core"/>
</dbReference>
<dbReference type="InterPro" id="IPR017730">
    <property type="entry name" value="Chaperonin_ClpB"/>
</dbReference>
<dbReference type="InterPro" id="IPR019489">
    <property type="entry name" value="Clp_ATPase_C"/>
</dbReference>
<dbReference type="InterPro" id="IPR036628">
    <property type="entry name" value="Clp_N_dom_sf"/>
</dbReference>
<dbReference type="InterPro" id="IPR004176">
    <property type="entry name" value="Clp_R_dom"/>
</dbReference>
<dbReference type="InterPro" id="IPR001270">
    <property type="entry name" value="ClpA/B"/>
</dbReference>
<dbReference type="InterPro" id="IPR018368">
    <property type="entry name" value="ClpA/B_CS1"/>
</dbReference>
<dbReference type="InterPro" id="IPR028299">
    <property type="entry name" value="ClpA/B_CS2"/>
</dbReference>
<dbReference type="InterPro" id="IPR041546">
    <property type="entry name" value="ClpA/ClpB_AAA_lid"/>
</dbReference>
<dbReference type="InterPro" id="IPR050130">
    <property type="entry name" value="ClpA_ClpB"/>
</dbReference>
<dbReference type="InterPro" id="IPR027417">
    <property type="entry name" value="P-loop_NTPase"/>
</dbReference>
<dbReference type="NCBIfam" id="TIGR03346">
    <property type="entry name" value="chaperone_ClpB"/>
    <property type="match status" value="1"/>
</dbReference>
<dbReference type="PANTHER" id="PTHR11638">
    <property type="entry name" value="ATP-DEPENDENT CLP PROTEASE"/>
    <property type="match status" value="1"/>
</dbReference>
<dbReference type="PANTHER" id="PTHR11638:SF18">
    <property type="entry name" value="HEAT SHOCK PROTEIN 104"/>
    <property type="match status" value="1"/>
</dbReference>
<dbReference type="Pfam" id="PF00004">
    <property type="entry name" value="AAA"/>
    <property type="match status" value="1"/>
</dbReference>
<dbReference type="Pfam" id="PF07724">
    <property type="entry name" value="AAA_2"/>
    <property type="match status" value="1"/>
</dbReference>
<dbReference type="Pfam" id="PF17871">
    <property type="entry name" value="AAA_lid_9"/>
    <property type="match status" value="1"/>
</dbReference>
<dbReference type="Pfam" id="PF02861">
    <property type="entry name" value="Clp_N"/>
    <property type="match status" value="2"/>
</dbReference>
<dbReference type="Pfam" id="PF10431">
    <property type="entry name" value="ClpB_D2-small"/>
    <property type="match status" value="1"/>
</dbReference>
<dbReference type="PRINTS" id="PR00300">
    <property type="entry name" value="CLPPROTEASEA"/>
</dbReference>
<dbReference type="SMART" id="SM00382">
    <property type="entry name" value="AAA"/>
    <property type="match status" value="2"/>
</dbReference>
<dbReference type="SMART" id="SM01086">
    <property type="entry name" value="ClpB_D2-small"/>
    <property type="match status" value="1"/>
</dbReference>
<dbReference type="SUPFAM" id="SSF81923">
    <property type="entry name" value="Double Clp-N motif"/>
    <property type="match status" value="1"/>
</dbReference>
<dbReference type="SUPFAM" id="SSF52540">
    <property type="entry name" value="P-loop containing nucleoside triphosphate hydrolases"/>
    <property type="match status" value="2"/>
</dbReference>
<dbReference type="PROSITE" id="PS51903">
    <property type="entry name" value="CLP_R"/>
    <property type="match status" value="1"/>
</dbReference>
<dbReference type="PROSITE" id="PS00870">
    <property type="entry name" value="CLPAB_1"/>
    <property type="match status" value="1"/>
</dbReference>
<dbReference type="PROSITE" id="PS00871">
    <property type="entry name" value="CLPAB_2"/>
    <property type="match status" value="1"/>
</dbReference>
<protein>
    <recommendedName>
        <fullName>Chaperone protein ClpB 2</fullName>
    </recommendedName>
</protein>
<feature type="chain" id="PRO_0000191184" description="Chaperone protein ClpB 2">
    <location>
        <begin position="1"/>
        <end position="879"/>
    </location>
</feature>
<feature type="domain" description="Clp R" evidence="2">
    <location>
        <begin position="3"/>
        <end position="151"/>
    </location>
</feature>
<feature type="region of interest" description="Repeat 1" evidence="2">
    <location>
        <begin position="6"/>
        <end position="71"/>
    </location>
</feature>
<feature type="region of interest" description="Repeat 2" evidence="2">
    <location>
        <begin position="86"/>
        <end position="151"/>
    </location>
</feature>
<feature type="region of interest" description="NBD1" evidence="1">
    <location>
        <begin position="164"/>
        <end position="345"/>
    </location>
</feature>
<feature type="region of interest" description="Linker" evidence="1">
    <location>
        <begin position="346"/>
        <end position="553"/>
    </location>
</feature>
<feature type="region of interest" description="NBD2" evidence="1">
    <location>
        <begin position="563"/>
        <end position="775"/>
    </location>
</feature>
<feature type="region of interest" description="C-terminal" evidence="1">
    <location>
        <begin position="776"/>
        <end position="879"/>
    </location>
</feature>
<feature type="coiled-coil region" evidence="1">
    <location>
        <begin position="396"/>
        <end position="530"/>
    </location>
</feature>
<feature type="binding site" evidence="1">
    <location>
        <begin position="211"/>
        <end position="218"/>
    </location>
    <ligand>
        <name>ATP</name>
        <dbReference type="ChEBI" id="CHEBI:30616"/>
        <label>1</label>
    </ligand>
</feature>
<feature type="binding site" evidence="1">
    <location>
        <begin position="613"/>
        <end position="620"/>
    </location>
    <ligand>
        <name>ATP</name>
        <dbReference type="ChEBI" id="CHEBI:30616"/>
        <label>2</label>
    </ligand>
</feature>
<accession>Q826F2</accession>
<reference key="1">
    <citation type="journal article" date="2001" name="Proc. Natl. Acad. Sci. U.S.A.">
        <title>Genome sequence of an industrial microorganism Streptomyces avermitilis: deducing the ability of producing secondary metabolites.</title>
        <authorList>
            <person name="Omura S."/>
            <person name="Ikeda H."/>
            <person name="Ishikawa J."/>
            <person name="Hanamoto A."/>
            <person name="Takahashi C."/>
            <person name="Shinose M."/>
            <person name="Takahashi Y."/>
            <person name="Horikawa H."/>
            <person name="Nakazawa H."/>
            <person name="Osonoe T."/>
            <person name="Kikuchi H."/>
            <person name="Shiba T."/>
            <person name="Sakaki Y."/>
            <person name="Hattori M."/>
        </authorList>
    </citation>
    <scope>NUCLEOTIDE SEQUENCE [LARGE SCALE GENOMIC DNA]</scope>
    <source>
        <strain>ATCC 31267 / DSM 46492 / JCM 5070 / NBRC 14893 / NCIMB 12804 / NRRL 8165 / MA-4680</strain>
    </source>
</reference>
<reference key="2">
    <citation type="journal article" date="2003" name="Nat. Biotechnol.">
        <title>Complete genome sequence and comparative analysis of the industrial microorganism Streptomyces avermitilis.</title>
        <authorList>
            <person name="Ikeda H."/>
            <person name="Ishikawa J."/>
            <person name="Hanamoto A."/>
            <person name="Shinose M."/>
            <person name="Kikuchi H."/>
            <person name="Shiba T."/>
            <person name="Sakaki Y."/>
            <person name="Hattori M."/>
            <person name="Omura S."/>
        </authorList>
    </citation>
    <scope>NUCLEOTIDE SEQUENCE [LARGE SCALE GENOMIC DNA]</scope>
    <source>
        <strain>ATCC 31267 / DSM 46492 / JCM 5070 / NBRC 14893 / NCIMB 12804 / NRRL 8165 / MA-4680</strain>
    </source>
</reference>
<evidence type="ECO:0000250" key="1"/>
<evidence type="ECO:0000255" key="2">
    <source>
        <dbReference type="PROSITE-ProRule" id="PRU01251"/>
    </source>
</evidence>
<evidence type="ECO:0000305" key="3"/>
<sequence>MDMNRLTQKSQEALQEAQTAAGRMGHTEVDGEHLLLALLDQEDGLIPRLLQQAGTEPKELRAAVREELSHRPKATGPGAAPGQVFVTQRLARLLDAAEREAKRLKDEYVSVEHLLLALAEESSSTAAGLLLKQAGITRDSFLSALTQVRGNQRVTSANPEVAYEALEKYGRDLVLEARSGRLDPVIGRDAEIRRVTQILSRKTKNNPVLIGDPGVGKTAIVEGLAQRIVRGDVPEGLRDKTVFALDMGSLVAGAKYRGEFEERLKAVLSEVKAAEGRILLFVDELHTVVGAGAAEGAMDAGNMLKPMLARGELHMIGATTLDEYRKHIEKDAALERRFQQVLVDEPSVEDTISILRGLRERLEVFHGVKIQDTALVSAATLSHRYITDRFLPDKAIDLVDEACARLRTEIDSMPAELDEITRRVTRLEIEEAALSKESDPASKTRLEELRRELADLRGEADAKHAQWEAERQAIRRVQELRQELEQVRHEAEEAERAYDLNRAAELRYGRLQDLERRLAAEEEQLAAKQGENRLLREVVTEEEIAEIVAAWTGIPVARLQEGEREKLLRLDEILRERVIGQDEAVKLVTDAIIRARSGIRDPRRPIGSFIFLGPTGVGKTELAKTLARTLFDSEENMVRLDMSEYQERHTVSRLMGAPPGYVGYEEGGQLTEAVRRKPYSVVLFDEIEKAHTDVFNTLLQILDDGRITDAQGRTVDFRNTVIIMTSNIGSEHLLDGATAEGEIKPDARALVMGELRGHFRPEFLNRVDDIVLFKPLGERQIERIVELQFDELRQRLAERRITVELTDAGREVIAHQGYDPVYGARPLRRYISHEVETLVGRALLRGDVQDGATVRVDAEHGELVVTYDQPEDVKGAWAA</sequence>